<sequence length="664" mass="75126">MNSRPLLVTCGLPYTNGPCHLGHLRTYVPADFYVRFMRRKGEEVVFICGSDNHGTPIVVSAEKEGTTPRQISERYHTHFSDTFTKMQVHFDHFGMTDDPTTHARTKHLVSRLIDRGYVYPKVIQQAYCIHCQKFLPDRYLEGICPHCKKPARGDECDQGCGKHLEPGEILEPTCKICGNRAEYREQEHFFFKLSGFQDWLREYLGELKGTDNAINYALGWVNEDLHDWCITRTLEWGVKFPGHDDLVVYVWVDAPIGYIGFTEEWAEKTGRDWKTYWCGENTRVTHFIGQDITYHHCVFWPAMLHGAGYGTPYAVVASGMLKIDDHKFSKSRGYVVWTNEDYLDQGLPADYLRYYLLSYTSHTKEMNFSWQLFQERINNEVVNNLGNFIYRSLHLSQKQFGGVPEGVVEQEIFDRITEAIGQVTGLVEAYDFKGAVDAILALSAWGNTYIQSKEPWKLAKTDQAAMAQVMRNCLQLAKALTLLIEPVMPERAGLIWSQLGQDSLIANNGFSAGLEPLSPGPLPAPSIVFSKIDDKMTQELDKRLRDRIDALDAEKKPKTPEISIEEFAKVEMKTGKILSAEQVPKSTKLLKLQVSIGDEVRQIVSGIAQFHNPEELVGKDVVVCTNLKPAKIFGIESNGMILAAGDNASLLRPETPVPSGTKIR</sequence>
<name>SYM_METHJ</name>
<proteinExistence type="inferred from homology"/>
<protein>
    <recommendedName>
        <fullName evidence="1">Methionine--tRNA ligase</fullName>
        <ecNumber evidence="1">6.1.1.10</ecNumber>
    </recommendedName>
    <alternativeName>
        <fullName evidence="1">Methionyl-tRNA synthetase</fullName>
        <shortName evidence="1">MetRS</shortName>
    </alternativeName>
</protein>
<reference key="1">
    <citation type="journal article" date="2016" name="Stand. Genomic Sci.">
        <title>Complete genome sequence of Methanospirillum hungatei type strain JF1.</title>
        <authorList>
            <person name="Gunsalus R.P."/>
            <person name="Cook L.E."/>
            <person name="Crable B."/>
            <person name="Rohlin L."/>
            <person name="McDonald E."/>
            <person name="Mouttaki H."/>
            <person name="Sieber J.R."/>
            <person name="Poweleit N."/>
            <person name="Zhou H."/>
            <person name="Lapidus A.L."/>
            <person name="Daligault H.E."/>
            <person name="Land M."/>
            <person name="Gilna P."/>
            <person name="Ivanova N."/>
            <person name="Kyrpides N."/>
            <person name="Culley D.E."/>
            <person name="McInerney M.J."/>
        </authorList>
    </citation>
    <scope>NUCLEOTIDE SEQUENCE [LARGE SCALE GENOMIC DNA]</scope>
    <source>
        <strain>ATCC 27890 / DSM 864 / NBRC 100397 / JF-1</strain>
    </source>
</reference>
<feature type="chain" id="PRO_0000331951" description="Methionine--tRNA ligase">
    <location>
        <begin position="1"/>
        <end position="664"/>
    </location>
</feature>
<feature type="domain" description="tRNA-binding" evidence="1">
    <location>
        <begin position="566"/>
        <end position="664"/>
    </location>
</feature>
<feature type="short sequence motif" description="'HIGH' region">
    <location>
        <begin position="13"/>
        <end position="23"/>
    </location>
</feature>
<feature type="short sequence motif" description="'KMSKS' region">
    <location>
        <begin position="327"/>
        <end position="331"/>
    </location>
</feature>
<feature type="binding site" evidence="1">
    <location>
        <position position="144"/>
    </location>
    <ligand>
        <name>Zn(2+)</name>
        <dbReference type="ChEBI" id="CHEBI:29105"/>
    </ligand>
</feature>
<feature type="binding site" evidence="1">
    <location>
        <position position="147"/>
    </location>
    <ligand>
        <name>Zn(2+)</name>
        <dbReference type="ChEBI" id="CHEBI:29105"/>
    </ligand>
</feature>
<feature type="binding site" evidence="1">
    <location>
        <position position="156"/>
    </location>
    <ligand>
        <name>Zn(2+)</name>
        <dbReference type="ChEBI" id="CHEBI:29105"/>
    </ligand>
</feature>
<feature type="binding site" evidence="1">
    <location>
        <position position="160"/>
    </location>
    <ligand>
        <name>Zn(2+)</name>
        <dbReference type="ChEBI" id="CHEBI:29105"/>
    </ligand>
</feature>
<feature type="binding site" evidence="1">
    <location>
        <position position="330"/>
    </location>
    <ligand>
        <name>ATP</name>
        <dbReference type="ChEBI" id="CHEBI:30616"/>
    </ligand>
</feature>
<evidence type="ECO:0000255" key="1">
    <source>
        <dbReference type="HAMAP-Rule" id="MF_00098"/>
    </source>
</evidence>
<evidence type="ECO:0000305" key="2"/>
<organism>
    <name type="scientific">Methanospirillum hungatei JF-1 (strain ATCC 27890 / DSM 864 / NBRC 100397 / JF-1)</name>
    <dbReference type="NCBI Taxonomy" id="323259"/>
    <lineage>
        <taxon>Archaea</taxon>
        <taxon>Methanobacteriati</taxon>
        <taxon>Methanobacteriota</taxon>
        <taxon>Stenosarchaea group</taxon>
        <taxon>Methanomicrobia</taxon>
        <taxon>Methanomicrobiales</taxon>
        <taxon>Methanospirillaceae</taxon>
        <taxon>Methanospirillum</taxon>
    </lineage>
</organism>
<keyword id="KW-0030">Aminoacyl-tRNA synthetase</keyword>
<keyword id="KW-0067">ATP-binding</keyword>
<keyword id="KW-0963">Cytoplasm</keyword>
<keyword id="KW-0436">Ligase</keyword>
<keyword id="KW-0479">Metal-binding</keyword>
<keyword id="KW-0547">Nucleotide-binding</keyword>
<keyword id="KW-0648">Protein biosynthesis</keyword>
<keyword id="KW-1185">Reference proteome</keyword>
<keyword id="KW-0694">RNA-binding</keyword>
<keyword id="KW-0820">tRNA-binding</keyword>
<keyword id="KW-0862">Zinc</keyword>
<gene>
    <name evidence="1" type="primary">metG</name>
    <name type="ordered locus">Mhun_2825</name>
</gene>
<dbReference type="EC" id="6.1.1.10" evidence="1"/>
<dbReference type="EMBL" id="CP000254">
    <property type="protein sequence ID" value="ABD42517.1"/>
    <property type="status" value="ALT_INIT"/>
    <property type="molecule type" value="Genomic_DNA"/>
</dbReference>
<dbReference type="RefSeq" id="WP_048068090.1">
    <property type="nucleotide sequence ID" value="NC_007796.1"/>
</dbReference>
<dbReference type="SMR" id="Q2FU77"/>
<dbReference type="FunCoup" id="Q2FU77">
    <property type="interactions" value="238"/>
</dbReference>
<dbReference type="STRING" id="323259.Mhun_2825"/>
<dbReference type="EnsemblBacteria" id="ABD42517">
    <property type="protein sequence ID" value="ABD42517"/>
    <property type="gene ID" value="Mhun_2825"/>
</dbReference>
<dbReference type="GeneID" id="3923173"/>
<dbReference type="KEGG" id="mhu:Mhun_2825"/>
<dbReference type="eggNOG" id="arCOG00810">
    <property type="taxonomic scope" value="Archaea"/>
</dbReference>
<dbReference type="HOGENOM" id="CLU_009710_1_2_2"/>
<dbReference type="InParanoid" id="Q2FU77"/>
<dbReference type="OrthoDB" id="371856at2157"/>
<dbReference type="Proteomes" id="UP000001941">
    <property type="component" value="Chromosome"/>
</dbReference>
<dbReference type="GO" id="GO:0017101">
    <property type="term" value="C:aminoacyl-tRNA synthetase multienzyme complex"/>
    <property type="evidence" value="ECO:0007669"/>
    <property type="project" value="TreeGrafter"/>
</dbReference>
<dbReference type="GO" id="GO:0005829">
    <property type="term" value="C:cytosol"/>
    <property type="evidence" value="ECO:0007669"/>
    <property type="project" value="TreeGrafter"/>
</dbReference>
<dbReference type="GO" id="GO:0005524">
    <property type="term" value="F:ATP binding"/>
    <property type="evidence" value="ECO:0007669"/>
    <property type="project" value="UniProtKB-UniRule"/>
</dbReference>
<dbReference type="GO" id="GO:0046872">
    <property type="term" value="F:metal ion binding"/>
    <property type="evidence" value="ECO:0007669"/>
    <property type="project" value="UniProtKB-KW"/>
</dbReference>
<dbReference type="GO" id="GO:0004825">
    <property type="term" value="F:methionine-tRNA ligase activity"/>
    <property type="evidence" value="ECO:0007669"/>
    <property type="project" value="UniProtKB-UniRule"/>
</dbReference>
<dbReference type="GO" id="GO:0000049">
    <property type="term" value="F:tRNA binding"/>
    <property type="evidence" value="ECO:0007669"/>
    <property type="project" value="UniProtKB-KW"/>
</dbReference>
<dbReference type="GO" id="GO:0006431">
    <property type="term" value="P:methionyl-tRNA aminoacylation"/>
    <property type="evidence" value="ECO:0007669"/>
    <property type="project" value="UniProtKB-UniRule"/>
</dbReference>
<dbReference type="CDD" id="cd07957">
    <property type="entry name" value="Anticodon_Ia_Met"/>
    <property type="match status" value="1"/>
</dbReference>
<dbReference type="CDD" id="cd00814">
    <property type="entry name" value="MetRS_core"/>
    <property type="match status" value="1"/>
</dbReference>
<dbReference type="CDD" id="cd02800">
    <property type="entry name" value="tRNA_bind_EcMetRS_like"/>
    <property type="match status" value="1"/>
</dbReference>
<dbReference type="FunFam" id="2.40.50.140:FF:000042">
    <property type="entry name" value="Methionine--tRNA ligase"/>
    <property type="match status" value="1"/>
</dbReference>
<dbReference type="Gene3D" id="3.40.50.620">
    <property type="entry name" value="HUPs"/>
    <property type="match status" value="1"/>
</dbReference>
<dbReference type="Gene3D" id="1.10.730.10">
    <property type="entry name" value="Isoleucyl-tRNA Synthetase, Domain 1"/>
    <property type="match status" value="1"/>
</dbReference>
<dbReference type="Gene3D" id="2.20.28.20">
    <property type="entry name" value="Methionyl-tRNA synthetase, Zn-domain"/>
    <property type="match status" value="1"/>
</dbReference>
<dbReference type="Gene3D" id="2.40.50.140">
    <property type="entry name" value="Nucleic acid-binding proteins"/>
    <property type="match status" value="1"/>
</dbReference>
<dbReference type="HAMAP" id="MF_00098">
    <property type="entry name" value="Met_tRNA_synth_type1"/>
    <property type="match status" value="1"/>
</dbReference>
<dbReference type="InterPro" id="IPR041872">
    <property type="entry name" value="Anticodon_Met"/>
</dbReference>
<dbReference type="InterPro" id="IPR004495">
    <property type="entry name" value="Met-tRNA-synth_bsu_C"/>
</dbReference>
<dbReference type="InterPro" id="IPR023458">
    <property type="entry name" value="Met-tRNA_ligase_1"/>
</dbReference>
<dbReference type="InterPro" id="IPR014758">
    <property type="entry name" value="Met-tRNA_synth"/>
</dbReference>
<dbReference type="InterPro" id="IPR015413">
    <property type="entry name" value="Methionyl/Leucyl_tRNA_Synth"/>
</dbReference>
<dbReference type="InterPro" id="IPR033911">
    <property type="entry name" value="MetRS_core"/>
</dbReference>
<dbReference type="InterPro" id="IPR029038">
    <property type="entry name" value="MetRS_Zn"/>
</dbReference>
<dbReference type="InterPro" id="IPR012340">
    <property type="entry name" value="NA-bd_OB-fold"/>
</dbReference>
<dbReference type="InterPro" id="IPR014729">
    <property type="entry name" value="Rossmann-like_a/b/a_fold"/>
</dbReference>
<dbReference type="InterPro" id="IPR002547">
    <property type="entry name" value="tRNA-bd_dom"/>
</dbReference>
<dbReference type="InterPro" id="IPR009080">
    <property type="entry name" value="tRNAsynth_Ia_anticodon-bd"/>
</dbReference>
<dbReference type="NCBIfam" id="TIGR00398">
    <property type="entry name" value="metG"/>
    <property type="match status" value="1"/>
</dbReference>
<dbReference type="NCBIfam" id="TIGR00399">
    <property type="entry name" value="metG_C_term"/>
    <property type="match status" value="1"/>
</dbReference>
<dbReference type="NCBIfam" id="NF001100">
    <property type="entry name" value="PRK00133.1"/>
    <property type="match status" value="1"/>
</dbReference>
<dbReference type="PANTHER" id="PTHR45765">
    <property type="entry name" value="METHIONINE--TRNA LIGASE"/>
    <property type="match status" value="1"/>
</dbReference>
<dbReference type="PANTHER" id="PTHR45765:SF1">
    <property type="entry name" value="METHIONINE--TRNA LIGASE, CYTOPLASMIC"/>
    <property type="match status" value="1"/>
</dbReference>
<dbReference type="Pfam" id="PF19303">
    <property type="entry name" value="Anticodon_3"/>
    <property type="match status" value="1"/>
</dbReference>
<dbReference type="Pfam" id="PF09334">
    <property type="entry name" value="tRNA-synt_1g"/>
    <property type="match status" value="1"/>
</dbReference>
<dbReference type="Pfam" id="PF01588">
    <property type="entry name" value="tRNA_bind"/>
    <property type="match status" value="1"/>
</dbReference>
<dbReference type="PRINTS" id="PR01041">
    <property type="entry name" value="TRNASYNTHMET"/>
</dbReference>
<dbReference type="SUPFAM" id="SSF47323">
    <property type="entry name" value="Anticodon-binding domain of a subclass of class I aminoacyl-tRNA synthetases"/>
    <property type="match status" value="1"/>
</dbReference>
<dbReference type="SUPFAM" id="SSF57770">
    <property type="entry name" value="Methionyl-tRNA synthetase (MetRS), Zn-domain"/>
    <property type="match status" value="1"/>
</dbReference>
<dbReference type="SUPFAM" id="SSF50249">
    <property type="entry name" value="Nucleic acid-binding proteins"/>
    <property type="match status" value="1"/>
</dbReference>
<dbReference type="SUPFAM" id="SSF52374">
    <property type="entry name" value="Nucleotidylyl transferase"/>
    <property type="match status" value="1"/>
</dbReference>
<dbReference type="PROSITE" id="PS50886">
    <property type="entry name" value="TRBD"/>
    <property type="match status" value="1"/>
</dbReference>
<comment type="function">
    <text evidence="1">Is required not only for elongation of protein synthesis but also for the initiation of all mRNA translation through initiator tRNA(fMet) aminoacylation.</text>
</comment>
<comment type="catalytic activity">
    <reaction evidence="1">
        <text>tRNA(Met) + L-methionine + ATP = L-methionyl-tRNA(Met) + AMP + diphosphate</text>
        <dbReference type="Rhea" id="RHEA:13481"/>
        <dbReference type="Rhea" id="RHEA-COMP:9667"/>
        <dbReference type="Rhea" id="RHEA-COMP:9698"/>
        <dbReference type="ChEBI" id="CHEBI:30616"/>
        <dbReference type="ChEBI" id="CHEBI:33019"/>
        <dbReference type="ChEBI" id="CHEBI:57844"/>
        <dbReference type="ChEBI" id="CHEBI:78442"/>
        <dbReference type="ChEBI" id="CHEBI:78530"/>
        <dbReference type="ChEBI" id="CHEBI:456215"/>
        <dbReference type="EC" id="6.1.1.10"/>
    </reaction>
</comment>
<comment type="cofactor">
    <cofactor evidence="1">
        <name>Zn(2+)</name>
        <dbReference type="ChEBI" id="CHEBI:29105"/>
    </cofactor>
    <text evidence="1">Binds 1 zinc ion per subunit.</text>
</comment>
<comment type="subunit">
    <text evidence="1">Homodimer.</text>
</comment>
<comment type="subcellular location">
    <subcellularLocation>
        <location evidence="1">Cytoplasm</location>
    </subcellularLocation>
</comment>
<comment type="similarity">
    <text evidence="1">Belongs to the class-I aminoacyl-tRNA synthetase family. MetG type 1 subfamily.</text>
</comment>
<comment type="sequence caution" evidence="2">
    <conflict type="erroneous initiation">
        <sequence resource="EMBL-CDS" id="ABD42517"/>
    </conflict>
</comment>
<accession>Q2FU77</accession>